<organism>
    <name type="scientific">Sorghum bicolor</name>
    <name type="common">Sorghum</name>
    <name type="synonym">Sorghum vulgare</name>
    <dbReference type="NCBI Taxonomy" id="4558"/>
    <lineage>
        <taxon>Eukaryota</taxon>
        <taxon>Viridiplantae</taxon>
        <taxon>Streptophyta</taxon>
        <taxon>Embryophyta</taxon>
        <taxon>Tracheophyta</taxon>
        <taxon>Spermatophyta</taxon>
        <taxon>Magnoliopsida</taxon>
        <taxon>Liliopsida</taxon>
        <taxon>Poales</taxon>
        <taxon>Poaceae</taxon>
        <taxon>PACMAD clade</taxon>
        <taxon>Panicoideae</taxon>
        <taxon>Andropogonodae</taxon>
        <taxon>Andropogoneae</taxon>
        <taxon>Sorghinae</taxon>
        <taxon>Sorghum</taxon>
    </lineage>
</organism>
<accession>A1E9R5</accession>
<feature type="chain" id="PRO_0000277179" description="DNA-directed RNA polymerase subunit beta'">
    <location>
        <begin position="1"/>
        <end position="683"/>
    </location>
</feature>
<feature type="binding site" evidence="1">
    <location>
        <position position="69"/>
    </location>
    <ligand>
        <name>Zn(2+)</name>
        <dbReference type="ChEBI" id="CHEBI:29105"/>
    </ligand>
</feature>
<feature type="binding site" evidence="1">
    <location>
        <position position="71"/>
    </location>
    <ligand>
        <name>Zn(2+)</name>
        <dbReference type="ChEBI" id="CHEBI:29105"/>
    </ligand>
</feature>
<feature type="binding site" evidence="1">
    <location>
        <position position="87"/>
    </location>
    <ligand>
        <name>Zn(2+)</name>
        <dbReference type="ChEBI" id="CHEBI:29105"/>
    </ligand>
</feature>
<feature type="binding site" evidence="1">
    <location>
        <position position="90"/>
    </location>
    <ligand>
        <name>Zn(2+)</name>
        <dbReference type="ChEBI" id="CHEBI:29105"/>
    </ligand>
</feature>
<feature type="binding site" evidence="1">
    <location>
        <position position="489"/>
    </location>
    <ligand>
        <name>Mg(2+)</name>
        <dbReference type="ChEBI" id="CHEBI:18420"/>
    </ligand>
</feature>
<feature type="binding site" evidence="1">
    <location>
        <position position="491"/>
    </location>
    <ligand>
        <name>Mg(2+)</name>
        <dbReference type="ChEBI" id="CHEBI:18420"/>
    </ligand>
</feature>
<feature type="binding site" evidence="1">
    <location>
        <position position="493"/>
    </location>
    <ligand>
        <name>Mg(2+)</name>
        <dbReference type="ChEBI" id="CHEBI:18420"/>
    </ligand>
</feature>
<sequence length="683" mass="78325">MIDQYKHKQLQIGLVSPQQIKAWAKKILPNGEVVGEVTRPSTFHYKTDKPEKDGLFCERIFGPIKSGICACGNSRASVAENEDERFCQKCGVEFVDSRIRRYQMGYIKLACPVTHVWYLKGLPSYIANLLDKPLKKLEGLVYGDFSFARPSAKKPTFLRLRGLFEDEISSCNHSISPFFSTPGFATFRNREIATGAGAIREQLADLDLRIIIENSLVEWKELEDEGYSGDEWEDRKRRIRKVFLIRRMQLAKHFIQTNVEPEWMVLCLLPVLPPELRPIVYRSGDKVVTSDINELYKRVIRRNNNLAYLLKRSELAPADLVMCQEKLVQEAVDTLLDSGSRGQPMRDGHNKVYKSLSDVIEGKEGRFRETLLGKRVDYSGRSVIVVGPSLSLHQCGLPLEIAIKLFQLFVIRDLITKRATSNVRIAKRKIWEKEPIVWEILQEVMRGHPVLLNRAPTLHRLGIQAFQPTLVEGRTICLHPLVCKGFNADFDGDQMAVHLPLSLEAQAEARLLMFSHMNLLSPAIGDPICVPTQDMLIGLYVLTIGNRRGICANRYNSCGNSPNKKINYNNNNYYKYTKDKEPHFSSSYDALGAYRQKRIGLNSPLWLRWKLDQRIVGSREVPIEVQYESFGTYHEIYAHYLVVGNRKKEIRSIYIRTTLGHISFYREIEEAIQGFSRAYSYTI</sequence>
<dbReference type="EC" id="2.7.7.6" evidence="1"/>
<dbReference type="EMBL" id="EF115542">
    <property type="protein sequence ID" value="ABK79487.1"/>
    <property type="molecule type" value="Genomic_DNA"/>
</dbReference>
<dbReference type="RefSeq" id="YP_899398.1">
    <property type="nucleotide sequence ID" value="NC_008602.1"/>
</dbReference>
<dbReference type="SMR" id="A1E9R5"/>
<dbReference type="FunCoup" id="A1E9R5">
    <property type="interactions" value="79"/>
</dbReference>
<dbReference type="STRING" id="4558.A1E9R5"/>
<dbReference type="GeneID" id="4549133"/>
<dbReference type="KEGG" id="sbi:4549133"/>
<dbReference type="eggNOG" id="ENOG502QPYA">
    <property type="taxonomic scope" value="Eukaryota"/>
</dbReference>
<dbReference type="InParanoid" id="A1E9R5"/>
<dbReference type="OrthoDB" id="35434at2759"/>
<dbReference type="Proteomes" id="UP000000768">
    <property type="component" value="Chloroplast"/>
</dbReference>
<dbReference type="ExpressionAtlas" id="A1E9R5">
    <property type="expression patterns" value="baseline and differential"/>
</dbReference>
<dbReference type="GO" id="GO:0009507">
    <property type="term" value="C:chloroplast"/>
    <property type="evidence" value="ECO:0007669"/>
    <property type="project" value="UniProtKB-SubCell"/>
</dbReference>
<dbReference type="GO" id="GO:0000428">
    <property type="term" value="C:DNA-directed RNA polymerase complex"/>
    <property type="evidence" value="ECO:0007669"/>
    <property type="project" value="UniProtKB-KW"/>
</dbReference>
<dbReference type="GO" id="GO:0005739">
    <property type="term" value="C:mitochondrion"/>
    <property type="evidence" value="ECO:0007669"/>
    <property type="project" value="GOC"/>
</dbReference>
<dbReference type="GO" id="GO:0003677">
    <property type="term" value="F:DNA binding"/>
    <property type="evidence" value="ECO:0007669"/>
    <property type="project" value="UniProtKB-UniRule"/>
</dbReference>
<dbReference type="GO" id="GO:0003899">
    <property type="term" value="F:DNA-directed RNA polymerase activity"/>
    <property type="evidence" value="ECO:0007669"/>
    <property type="project" value="UniProtKB-UniRule"/>
</dbReference>
<dbReference type="GO" id="GO:0000287">
    <property type="term" value="F:magnesium ion binding"/>
    <property type="evidence" value="ECO:0007669"/>
    <property type="project" value="UniProtKB-UniRule"/>
</dbReference>
<dbReference type="GO" id="GO:0008270">
    <property type="term" value="F:zinc ion binding"/>
    <property type="evidence" value="ECO:0007669"/>
    <property type="project" value="UniProtKB-UniRule"/>
</dbReference>
<dbReference type="GO" id="GO:0006351">
    <property type="term" value="P:DNA-templated transcription"/>
    <property type="evidence" value="ECO:0007669"/>
    <property type="project" value="UniProtKB-UniRule"/>
</dbReference>
<dbReference type="Gene3D" id="1.10.40.90">
    <property type="match status" value="1"/>
</dbReference>
<dbReference type="Gene3D" id="2.40.40.20">
    <property type="match status" value="1"/>
</dbReference>
<dbReference type="Gene3D" id="4.10.860.120">
    <property type="entry name" value="RNA polymerase II, clamp domain"/>
    <property type="match status" value="1"/>
</dbReference>
<dbReference type="Gene3D" id="1.10.274.100">
    <property type="entry name" value="RNA polymerase Rpb1, domain 3"/>
    <property type="match status" value="1"/>
</dbReference>
<dbReference type="HAMAP" id="MF_01323">
    <property type="entry name" value="RNApol_bact_RpoC1"/>
    <property type="match status" value="1"/>
</dbReference>
<dbReference type="InterPro" id="IPR045867">
    <property type="entry name" value="DNA-dir_RpoC_beta_prime"/>
</dbReference>
<dbReference type="InterPro" id="IPR000722">
    <property type="entry name" value="RNA_pol_asu"/>
</dbReference>
<dbReference type="InterPro" id="IPR006592">
    <property type="entry name" value="RNA_pol_N"/>
</dbReference>
<dbReference type="InterPro" id="IPR007080">
    <property type="entry name" value="RNA_pol_Rpb1_1"/>
</dbReference>
<dbReference type="InterPro" id="IPR042102">
    <property type="entry name" value="RNA_pol_Rpb1_3_sf"/>
</dbReference>
<dbReference type="InterPro" id="IPR044893">
    <property type="entry name" value="RNA_pol_Rpb1_clamp_domain"/>
</dbReference>
<dbReference type="InterPro" id="IPR034678">
    <property type="entry name" value="RNApol_RpoC1"/>
</dbReference>
<dbReference type="PANTHER" id="PTHR19376">
    <property type="entry name" value="DNA-DIRECTED RNA POLYMERASE"/>
    <property type="match status" value="1"/>
</dbReference>
<dbReference type="PANTHER" id="PTHR19376:SF54">
    <property type="entry name" value="DNA-DIRECTED RNA POLYMERASE SUBUNIT BETA"/>
    <property type="match status" value="1"/>
</dbReference>
<dbReference type="Pfam" id="PF04997">
    <property type="entry name" value="RNA_pol_Rpb1_1"/>
    <property type="match status" value="1"/>
</dbReference>
<dbReference type="Pfam" id="PF00623">
    <property type="entry name" value="RNA_pol_Rpb1_2"/>
    <property type="match status" value="2"/>
</dbReference>
<dbReference type="SMART" id="SM00663">
    <property type="entry name" value="RPOLA_N"/>
    <property type="match status" value="1"/>
</dbReference>
<dbReference type="SUPFAM" id="SSF64484">
    <property type="entry name" value="beta and beta-prime subunits of DNA dependent RNA-polymerase"/>
    <property type="match status" value="1"/>
</dbReference>
<reference key="1">
    <citation type="journal article" date="2007" name="Theor. Appl. Genet.">
        <title>Complete chloroplast genome sequences of Hordeum vulgare, Sorghum bicolor and Agrostis stolonifera, and comparative analyses with other grass genomes.</title>
        <authorList>
            <person name="Saski C."/>
            <person name="Lee S.-B."/>
            <person name="Fjellheim S."/>
            <person name="Guda C."/>
            <person name="Jansen R.K."/>
            <person name="Luo H."/>
            <person name="Tomkins J."/>
            <person name="Rognli O.A."/>
            <person name="Daniell H."/>
            <person name="Clarke J.L."/>
        </authorList>
    </citation>
    <scope>NUCLEOTIDE SEQUENCE [LARGE SCALE GENOMIC DNA]</scope>
    <source>
        <strain>cv. BTx623</strain>
    </source>
</reference>
<proteinExistence type="inferred from homology"/>
<keyword id="KW-0150">Chloroplast</keyword>
<keyword id="KW-0240">DNA-directed RNA polymerase</keyword>
<keyword id="KW-0460">Magnesium</keyword>
<keyword id="KW-0479">Metal-binding</keyword>
<keyword id="KW-0548">Nucleotidyltransferase</keyword>
<keyword id="KW-0934">Plastid</keyword>
<keyword id="KW-1185">Reference proteome</keyword>
<keyword id="KW-0804">Transcription</keyword>
<keyword id="KW-0808">Transferase</keyword>
<keyword id="KW-0862">Zinc</keyword>
<evidence type="ECO:0000255" key="1">
    <source>
        <dbReference type="HAMAP-Rule" id="MF_01323"/>
    </source>
</evidence>
<geneLocation type="chloroplast"/>
<name>RPOC1_SORBI</name>
<gene>
    <name evidence="1" type="primary">rpoC1</name>
</gene>
<protein>
    <recommendedName>
        <fullName evidence="1">DNA-directed RNA polymerase subunit beta'</fullName>
        <ecNumber evidence="1">2.7.7.6</ecNumber>
    </recommendedName>
    <alternativeName>
        <fullName evidence="1">PEP</fullName>
    </alternativeName>
    <alternativeName>
        <fullName evidence="1">Plastid-encoded RNA polymerase subunit beta'</fullName>
        <shortName evidence="1">RNA polymerase subunit beta'</shortName>
    </alternativeName>
</protein>
<comment type="function">
    <text evidence="1">DNA-dependent RNA polymerase catalyzes the transcription of DNA into RNA using the four ribonucleoside triphosphates as substrates.</text>
</comment>
<comment type="catalytic activity">
    <reaction evidence="1">
        <text>RNA(n) + a ribonucleoside 5'-triphosphate = RNA(n+1) + diphosphate</text>
        <dbReference type="Rhea" id="RHEA:21248"/>
        <dbReference type="Rhea" id="RHEA-COMP:14527"/>
        <dbReference type="Rhea" id="RHEA-COMP:17342"/>
        <dbReference type="ChEBI" id="CHEBI:33019"/>
        <dbReference type="ChEBI" id="CHEBI:61557"/>
        <dbReference type="ChEBI" id="CHEBI:140395"/>
        <dbReference type="EC" id="2.7.7.6"/>
    </reaction>
</comment>
<comment type="cofactor">
    <cofactor evidence="1">
        <name>Mg(2+)</name>
        <dbReference type="ChEBI" id="CHEBI:18420"/>
    </cofactor>
    <text evidence="1">Binds 1 Mg(2+) ion per subunit.</text>
</comment>
<comment type="cofactor">
    <cofactor evidence="1">
        <name>Zn(2+)</name>
        <dbReference type="ChEBI" id="CHEBI:29105"/>
    </cofactor>
    <text evidence="1">Binds 1 Zn(2+) ion per subunit.</text>
</comment>
<comment type="subunit">
    <text evidence="1">In plastids the minimal PEP RNA polymerase catalytic core is composed of four subunits: alpha, beta, beta', and beta''. When a (nuclear-encoded) sigma factor is associated with the core the holoenzyme is formed, which can initiate transcription.</text>
</comment>
<comment type="subcellular location">
    <subcellularLocation>
        <location evidence="1">Plastid</location>
        <location evidence="1">Chloroplast</location>
    </subcellularLocation>
</comment>
<comment type="similarity">
    <text evidence="1">Belongs to the RNA polymerase beta' chain family. RpoC1 subfamily.</text>
</comment>